<feature type="chain" id="PRO_1000065117" description="Ornithine carbamoyltransferase">
    <location>
        <begin position="1"/>
        <end position="334"/>
    </location>
</feature>
<feature type="binding site" evidence="2">
    <location>
        <begin position="56"/>
        <end position="59"/>
    </location>
    <ligand>
        <name>carbamoyl phosphate</name>
        <dbReference type="ChEBI" id="CHEBI:58228"/>
    </ligand>
</feature>
<feature type="binding site" evidence="2">
    <location>
        <position position="83"/>
    </location>
    <ligand>
        <name>carbamoyl phosphate</name>
        <dbReference type="ChEBI" id="CHEBI:58228"/>
    </ligand>
</feature>
<feature type="binding site" evidence="2">
    <location>
        <position position="107"/>
    </location>
    <ligand>
        <name>carbamoyl phosphate</name>
        <dbReference type="ChEBI" id="CHEBI:58228"/>
    </ligand>
</feature>
<feature type="binding site" evidence="2">
    <location>
        <begin position="134"/>
        <end position="137"/>
    </location>
    <ligand>
        <name>carbamoyl phosphate</name>
        <dbReference type="ChEBI" id="CHEBI:58228"/>
    </ligand>
</feature>
<feature type="binding site" evidence="2">
    <location>
        <position position="168"/>
    </location>
    <ligand>
        <name>L-ornithine</name>
        <dbReference type="ChEBI" id="CHEBI:46911"/>
    </ligand>
</feature>
<feature type="binding site" evidence="2">
    <location>
        <position position="232"/>
    </location>
    <ligand>
        <name>L-ornithine</name>
        <dbReference type="ChEBI" id="CHEBI:46911"/>
    </ligand>
</feature>
<feature type="binding site" evidence="2">
    <location>
        <begin position="236"/>
        <end position="237"/>
    </location>
    <ligand>
        <name>L-ornithine</name>
        <dbReference type="ChEBI" id="CHEBI:46911"/>
    </ligand>
</feature>
<feature type="binding site" evidence="2">
    <location>
        <begin position="274"/>
        <end position="275"/>
    </location>
    <ligand>
        <name>carbamoyl phosphate</name>
        <dbReference type="ChEBI" id="CHEBI:58228"/>
    </ligand>
</feature>
<feature type="binding site" evidence="2">
    <location>
        <position position="320"/>
    </location>
    <ligand>
        <name>carbamoyl phosphate</name>
        <dbReference type="ChEBI" id="CHEBI:58228"/>
    </ligand>
</feature>
<dbReference type="EC" id="2.1.3.3" evidence="2"/>
<dbReference type="EMBL" id="CP000036">
    <property type="protein sequence ID" value="ABB68614.1"/>
    <property type="molecule type" value="Genomic_DNA"/>
</dbReference>
<dbReference type="SMR" id="Q31TJ4"/>
<dbReference type="KEGG" id="sbo:SBO_4188"/>
<dbReference type="HOGENOM" id="CLU_043846_3_1_6"/>
<dbReference type="UniPathway" id="UPA00068">
    <property type="reaction ID" value="UER00112"/>
</dbReference>
<dbReference type="Proteomes" id="UP000007067">
    <property type="component" value="Chromosome"/>
</dbReference>
<dbReference type="GO" id="GO:0005737">
    <property type="term" value="C:cytoplasm"/>
    <property type="evidence" value="ECO:0007669"/>
    <property type="project" value="UniProtKB-SubCell"/>
</dbReference>
<dbReference type="GO" id="GO:0016597">
    <property type="term" value="F:amino acid binding"/>
    <property type="evidence" value="ECO:0007669"/>
    <property type="project" value="InterPro"/>
</dbReference>
<dbReference type="GO" id="GO:0004585">
    <property type="term" value="F:ornithine carbamoyltransferase activity"/>
    <property type="evidence" value="ECO:0007669"/>
    <property type="project" value="UniProtKB-UniRule"/>
</dbReference>
<dbReference type="GO" id="GO:0042450">
    <property type="term" value="P:arginine biosynthetic process via ornithine"/>
    <property type="evidence" value="ECO:0007669"/>
    <property type="project" value="TreeGrafter"/>
</dbReference>
<dbReference type="GO" id="GO:0019240">
    <property type="term" value="P:citrulline biosynthetic process"/>
    <property type="evidence" value="ECO:0007669"/>
    <property type="project" value="TreeGrafter"/>
</dbReference>
<dbReference type="GO" id="GO:0006526">
    <property type="term" value="P:L-arginine biosynthetic process"/>
    <property type="evidence" value="ECO:0007669"/>
    <property type="project" value="UniProtKB-UniRule"/>
</dbReference>
<dbReference type="FunFam" id="3.40.50.1370:FF:000004">
    <property type="entry name" value="Ornithine carbamoyltransferase"/>
    <property type="match status" value="1"/>
</dbReference>
<dbReference type="Gene3D" id="3.40.50.1370">
    <property type="entry name" value="Aspartate/ornithine carbamoyltransferase"/>
    <property type="match status" value="2"/>
</dbReference>
<dbReference type="HAMAP" id="MF_01109">
    <property type="entry name" value="OTCase"/>
    <property type="match status" value="1"/>
</dbReference>
<dbReference type="InterPro" id="IPR006132">
    <property type="entry name" value="Asp/Orn_carbamoyltranf_P-bd"/>
</dbReference>
<dbReference type="InterPro" id="IPR006130">
    <property type="entry name" value="Asp/Orn_carbamoylTrfase"/>
</dbReference>
<dbReference type="InterPro" id="IPR036901">
    <property type="entry name" value="Asp/Orn_carbamoylTrfase_sf"/>
</dbReference>
<dbReference type="InterPro" id="IPR006131">
    <property type="entry name" value="Asp_carbamoyltransf_Asp/Orn-bd"/>
</dbReference>
<dbReference type="InterPro" id="IPR002292">
    <property type="entry name" value="Orn/put_carbamltrans"/>
</dbReference>
<dbReference type="InterPro" id="IPR024904">
    <property type="entry name" value="OTCase_ArgI"/>
</dbReference>
<dbReference type="NCBIfam" id="TIGR00658">
    <property type="entry name" value="orni_carb_tr"/>
    <property type="match status" value="1"/>
</dbReference>
<dbReference type="NCBIfam" id="NF009213">
    <property type="entry name" value="PRK12562.1"/>
    <property type="match status" value="1"/>
</dbReference>
<dbReference type="PANTHER" id="PTHR45753:SF4">
    <property type="entry name" value="ORNITHINE CARBAMOYLTRANSFERASE SUBUNIT F-RELATED"/>
    <property type="match status" value="1"/>
</dbReference>
<dbReference type="PANTHER" id="PTHR45753">
    <property type="entry name" value="ORNITHINE CARBAMOYLTRANSFERASE, MITOCHONDRIAL"/>
    <property type="match status" value="1"/>
</dbReference>
<dbReference type="Pfam" id="PF00185">
    <property type="entry name" value="OTCace"/>
    <property type="match status" value="1"/>
</dbReference>
<dbReference type="Pfam" id="PF02729">
    <property type="entry name" value="OTCace_N"/>
    <property type="match status" value="1"/>
</dbReference>
<dbReference type="PRINTS" id="PR00100">
    <property type="entry name" value="AOTCASE"/>
</dbReference>
<dbReference type="PRINTS" id="PR00102">
    <property type="entry name" value="OTCASE"/>
</dbReference>
<dbReference type="SUPFAM" id="SSF53671">
    <property type="entry name" value="Aspartate/ornithine carbamoyltransferase"/>
    <property type="match status" value="1"/>
</dbReference>
<dbReference type="PROSITE" id="PS00097">
    <property type="entry name" value="CARBAMOYLTRANSFERASE"/>
    <property type="match status" value="1"/>
</dbReference>
<evidence type="ECO:0000250" key="1"/>
<evidence type="ECO:0000255" key="2">
    <source>
        <dbReference type="HAMAP-Rule" id="MF_01109"/>
    </source>
</evidence>
<accession>Q31TJ4</accession>
<keyword id="KW-0028">Amino-acid biosynthesis</keyword>
<keyword id="KW-0055">Arginine biosynthesis</keyword>
<keyword id="KW-0963">Cytoplasm</keyword>
<keyword id="KW-0808">Transferase</keyword>
<organism>
    <name type="scientific">Shigella boydii serotype 4 (strain Sb227)</name>
    <dbReference type="NCBI Taxonomy" id="300268"/>
    <lineage>
        <taxon>Bacteria</taxon>
        <taxon>Pseudomonadati</taxon>
        <taxon>Pseudomonadota</taxon>
        <taxon>Gammaproteobacteria</taxon>
        <taxon>Enterobacterales</taxon>
        <taxon>Enterobacteriaceae</taxon>
        <taxon>Shigella</taxon>
    </lineage>
</organism>
<reference key="1">
    <citation type="journal article" date="2005" name="Nucleic Acids Res.">
        <title>Genome dynamics and diversity of Shigella species, the etiologic agents of bacillary dysentery.</title>
        <authorList>
            <person name="Yang F."/>
            <person name="Yang J."/>
            <person name="Zhang X."/>
            <person name="Chen L."/>
            <person name="Jiang Y."/>
            <person name="Yan Y."/>
            <person name="Tang X."/>
            <person name="Wang J."/>
            <person name="Xiong Z."/>
            <person name="Dong J."/>
            <person name="Xue Y."/>
            <person name="Zhu Y."/>
            <person name="Xu X."/>
            <person name="Sun L."/>
            <person name="Chen S."/>
            <person name="Nie H."/>
            <person name="Peng J."/>
            <person name="Xu J."/>
            <person name="Wang Y."/>
            <person name="Yuan Z."/>
            <person name="Wen Y."/>
            <person name="Yao Z."/>
            <person name="Shen Y."/>
            <person name="Qiang B."/>
            <person name="Hou Y."/>
            <person name="Yu J."/>
            <person name="Jin Q."/>
        </authorList>
    </citation>
    <scope>NUCLEOTIDE SEQUENCE [LARGE SCALE GENOMIC DNA]</scope>
    <source>
        <strain>Sb227</strain>
    </source>
</reference>
<protein>
    <recommendedName>
        <fullName evidence="2">Ornithine carbamoyltransferase</fullName>
        <shortName evidence="2">OTCase</shortName>
        <ecNumber evidence="2">2.1.3.3</ecNumber>
    </recommendedName>
</protein>
<name>OTC_SHIBS</name>
<sequence>MSGFYHKHFLKLLDFTPAELNSLLQLAAKLKADKKSGKEEAKLTGKNIALIFEKDSTRTRCSFEVAAYDQGARVTYLGPSGSQIGHKESIKDTARVLGRMYDGIQYRGYGQEIAETLAEYAGVPVWNGLTNEFHPTQLLADLLTMQEHLPGKAFNEMTLVYAGDARNNMGNSMLEAAALTGLDLRLVAPQACWPEAALVTECRALAQQNGGNITLTEDVAKGVEGADFIYTDVWVSMGEAKEKWAERIALLRDYQVNSKMMQLTGNPEVKFLHCLPAFHDDQTTLGKKMAEEFGLHGGMEVTDEVFESAASIVFDQAENRMHTIKAVMVATLSK</sequence>
<proteinExistence type="inferred from homology"/>
<comment type="function">
    <text evidence="1">Reversibly catalyzes the transfer of the carbamoyl group from carbamoyl phosphate (CP) to the N(epsilon) atom of ornithine (ORN) to produce L-citrulline.</text>
</comment>
<comment type="catalytic activity">
    <reaction evidence="2">
        <text>carbamoyl phosphate + L-ornithine = L-citrulline + phosphate + H(+)</text>
        <dbReference type="Rhea" id="RHEA:19513"/>
        <dbReference type="ChEBI" id="CHEBI:15378"/>
        <dbReference type="ChEBI" id="CHEBI:43474"/>
        <dbReference type="ChEBI" id="CHEBI:46911"/>
        <dbReference type="ChEBI" id="CHEBI:57743"/>
        <dbReference type="ChEBI" id="CHEBI:58228"/>
        <dbReference type="EC" id="2.1.3.3"/>
    </reaction>
</comment>
<comment type="pathway">
    <text evidence="2">Amino-acid biosynthesis; L-arginine biosynthesis; L-arginine from L-ornithine and carbamoyl phosphate: step 1/3.</text>
</comment>
<comment type="subcellular location">
    <subcellularLocation>
        <location evidence="2">Cytoplasm</location>
    </subcellularLocation>
</comment>
<comment type="similarity">
    <text evidence="2">Belongs to the aspartate/ornithine carbamoyltransferase superfamily. OTCase family.</text>
</comment>
<gene>
    <name evidence="2" type="primary">argI</name>
    <name type="ordered locus">SBO_4188</name>
</gene>